<keyword id="KW-0025">Alternative splicing</keyword>
<keyword id="KW-0067">ATP-binding</keyword>
<keyword id="KW-0106">Calcium</keyword>
<keyword id="KW-1003">Cell membrane</keyword>
<keyword id="KW-1015">Disulfide bond</keyword>
<keyword id="KW-0325">Glycoprotein</keyword>
<keyword id="KW-0378">Hydrolase</keyword>
<keyword id="KW-0460">Magnesium</keyword>
<keyword id="KW-0472">Membrane</keyword>
<keyword id="KW-0479">Metal-binding</keyword>
<keyword id="KW-0547">Nucleotide-binding</keyword>
<keyword id="KW-1267">Proteomics identification</keyword>
<keyword id="KW-1185">Reference proteome</keyword>
<keyword id="KW-0812">Transmembrane</keyword>
<keyword id="KW-1133">Transmembrane helix</keyword>
<gene>
    <name type="primary">ENTPD8</name>
    <name type="ORF">UNQ2492/PRO5779</name>
</gene>
<reference key="1">
    <citation type="journal article" date="2006" name="Biochemistry">
        <title>Molecular cloning and characterization of expressed human ecto-nucleoside triphosphate diphosphohydrolase 8 (E-NTPDase 8) and its soluble extracellular domain.</title>
        <authorList>
            <person name="Knowles A.F."/>
            <person name="Li C."/>
        </authorList>
    </citation>
    <scope>NUCLEOTIDE SEQUENCE [MRNA] (ISOFORM 1)</scope>
    <scope>FUNCTION</scope>
    <scope>ENZYME ACTIVITY</scope>
    <scope>DOMAIN</scope>
    <scope>GLYCOSYLATION</scope>
    <scope>VARIANT PRO-62</scope>
</reference>
<reference key="2">
    <citation type="journal article" date="2007" name="Am. J. Physiol.">
        <title>Cloning, purification, and identification of the liver canalicular ecto-ATPase as NTPDase8.</title>
        <authorList>
            <person name="Fausther M."/>
            <person name="Lecka J."/>
            <person name="Kukulski F."/>
            <person name="Levesque S.A."/>
            <person name="Pelletier J."/>
            <person name="Zimmermann H."/>
            <person name="Dranoff J.A."/>
            <person name="Sevigny J."/>
        </authorList>
    </citation>
    <scope>NUCLEOTIDE SEQUENCE [MRNA] (ISOFORM 1)</scope>
    <scope>FUNCTION</scope>
    <scope>ENZYME ACTIVITY</scope>
    <scope>BIOPHYSICOCHEMICAL PROPERTIES</scope>
    <scope>VARIANT PRO-62</scope>
    <source>
        <tissue>Liver</tissue>
    </source>
</reference>
<reference key="3">
    <citation type="journal article" date="2003" name="Genome Res.">
        <title>The secreted protein discovery initiative (SPDI), a large-scale effort to identify novel human secreted and transmembrane proteins: a bioinformatics assessment.</title>
        <authorList>
            <person name="Clark H.F."/>
            <person name="Gurney A.L."/>
            <person name="Abaya E."/>
            <person name="Baker K."/>
            <person name="Baldwin D.T."/>
            <person name="Brush J."/>
            <person name="Chen J."/>
            <person name="Chow B."/>
            <person name="Chui C."/>
            <person name="Crowley C."/>
            <person name="Currell B."/>
            <person name="Deuel B."/>
            <person name="Dowd P."/>
            <person name="Eaton D."/>
            <person name="Foster J.S."/>
            <person name="Grimaldi C."/>
            <person name="Gu Q."/>
            <person name="Hass P.E."/>
            <person name="Heldens S."/>
            <person name="Huang A."/>
            <person name="Kim H.S."/>
            <person name="Klimowski L."/>
            <person name="Jin Y."/>
            <person name="Johnson S."/>
            <person name="Lee J."/>
            <person name="Lewis L."/>
            <person name="Liao D."/>
            <person name="Mark M.R."/>
            <person name="Robbie E."/>
            <person name="Sanchez C."/>
            <person name="Schoenfeld J."/>
            <person name="Seshagiri S."/>
            <person name="Simmons L."/>
            <person name="Singh J."/>
            <person name="Smith V."/>
            <person name="Stinson J."/>
            <person name="Vagts A."/>
            <person name="Vandlen R.L."/>
            <person name="Watanabe C."/>
            <person name="Wieand D."/>
            <person name="Woods K."/>
            <person name="Xie M.-H."/>
            <person name="Yansura D.G."/>
            <person name="Yi S."/>
            <person name="Yu G."/>
            <person name="Yuan J."/>
            <person name="Zhang M."/>
            <person name="Zhang Z."/>
            <person name="Goddard A.D."/>
            <person name="Wood W.I."/>
            <person name="Godowski P.J."/>
            <person name="Gray A.M."/>
        </authorList>
    </citation>
    <scope>NUCLEOTIDE SEQUENCE [LARGE SCALE MRNA] (ISOFORM 2)</scope>
    <scope>VARIANT PRO-62</scope>
</reference>
<reference key="4">
    <citation type="journal article" date="2004" name="Nature">
        <title>DNA sequence and analysis of human chromosome 9.</title>
        <authorList>
            <person name="Humphray S.J."/>
            <person name="Oliver K."/>
            <person name="Hunt A.R."/>
            <person name="Plumb R.W."/>
            <person name="Loveland J.E."/>
            <person name="Howe K.L."/>
            <person name="Andrews T.D."/>
            <person name="Searle S."/>
            <person name="Hunt S.E."/>
            <person name="Scott C.E."/>
            <person name="Jones M.C."/>
            <person name="Ainscough R."/>
            <person name="Almeida J.P."/>
            <person name="Ambrose K.D."/>
            <person name="Ashwell R.I.S."/>
            <person name="Babbage A.K."/>
            <person name="Babbage S."/>
            <person name="Bagguley C.L."/>
            <person name="Bailey J."/>
            <person name="Banerjee R."/>
            <person name="Barker D.J."/>
            <person name="Barlow K.F."/>
            <person name="Bates K."/>
            <person name="Beasley H."/>
            <person name="Beasley O."/>
            <person name="Bird C.P."/>
            <person name="Bray-Allen S."/>
            <person name="Brown A.J."/>
            <person name="Brown J.Y."/>
            <person name="Burford D."/>
            <person name="Burrill W."/>
            <person name="Burton J."/>
            <person name="Carder C."/>
            <person name="Carter N.P."/>
            <person name="Chapman J.C."/>
            <person name="Chen Y."/>
            <person name="Clarke G."/>
            <person name="Clark S.Y."/>
            <person name="Clee C.M."/>
            <person name="Clegg S."/>
            <person name="Collier R.E."/>
            <person name="Corby N."/>
            <person name="Crosier M."/>
            <person name="Cummings A.T."/>
            <person name="Davies J."/>
            <person name="Dhami P."/>
            <person name="Dunn M."/>
            <person name="Dutta I."/>
            <person name="Dyer L.W."/>
            <person name="Earthrowl M.E."/>
            <person name="Faulkner L."/>
            <person name="Fleming C.J."/>
            <person name="Frankish A."/>
            <person name="Frankland J.A."/>
            <person name="French L."/>
            <person name="Fricker D.G."/>
            <person name="Garner P."/>
            <person name="Garnett J."/>
            <person name="Ghori J."/>
            <person name="Gilbert J.G.R."/>
            <person name="Glison C."/>
            <person name="Grafham D.V."/>
            <person name="Gribble S."/>
            <person name="Griffiths C."/>
            <person name="Griffiths-Jones S."/>
            <person name="Grocock R."/>
            <person name="Guy J."/>
            <person name="Hall R.E."/>
            <person name="Hammond S."/>
            <person name="Harley J.L."/>
            <person name="Harrison E.S.I."/>
            <person name="Hart E.A."/>
            <person name="Heath P.D."/>
            <person name="Henderson C.D."/>
            <person name="Hopkins B.L."/>
            <person name="Howard P.J."/>
            <person name="Howden P.J."/>
            <person name="Huckle E."/>
            <person name="Johnson C."/>
            <person name="Johnson D."/>
            <person name="Joy A.A."/>
            <person name="Kay M."/>
            <person name="Keenan S."/>
            <person name="Kershaw J.K."/>
            <person name="Kimberley A.M."/>
            <person name="King A."/>
            <person name="Knights A."/>
            <person name="Laird G.K."/>
            <person name="Langford C."/>
            <person name="Lawlor S."/>
            <person name="Leongamornlert D.A."/>
            <person name="Leversha M."/>
            <person name="Lloyd C."/>
            <person name="Lloyd D.M."/>
            <person name="Lovell J."/>
            <person name="Martin S."/>
            <person name="Mashreghi-Mohammadi M."/>
            <person name="Matthews L."/>
            <person name="McLaren S."/>
            <person name="McLay K.E."/>
            <person name="McMurray A."/>
            <person name="Milne S."/>
            <person name="Nickerson T."/>
            <person name="Nisbett J."/>
            <person name="Nordsiek G."/>
            <person name="Pearce A.V."/>
            <person name="Peck A.I."/>
            <person name="Porter K.M."/>
            <person name="Pandian R."/>
            <person name="Pelan S."/>
            <person name="Phillimore B."/>
            <person name="Povey S."/>
            <person name="Ramsey Y."/>
            <person name="Rand V."/>
            <person name="Scharfe M."/>
            <person name="Sehra H.K."/>
            <person name="Shownkeen R."/>
            <person name="Sims S.K."/>
            <person name="Skuce C.D."/>
            <person name="Smith M."/>
            <person name="Steward C.A."/>
            <person name="Swarbreck D."/>
            <person name="Sycamore N."/>
            <person name="Tester J."/>
            <person name="Thorpe A."/>
            <person name="Tracey A."/>
            <person name="Tromans A."/>
            <person name="Thomas D.W."/>
            <person name="Wall M."/>
            <person name="Wallis J.M."/>
            <person name="West A.P."/>
            <person name="Whitehead S.L."/>
            <person name="Willey D.L."/>
            <person name="Williams S.A."/>
            <person name="Wilming L."/>
            <person name="Wray P.W."/>
            <person name="Young L."/>
            <person name="Ashurst J.L."/>
            <person name="Coulson A."/>
            <person name="Blocker H."/>
            <person name="Durbin R.M."/>
            <person name="Sulston J.E."/>
            <person name="Hubbard T."/>
            <person name="Jackson M.J."/>
            <person name="Bentley D.R."/>
            <person name="Beck S."/>
            <person name="Rogers J."/>
            <person name="Dunham I."/>
        </authorList>
    </citation>
    <scope>NUCLEOTIDE SEQUENCE [LARGE SCALE GENOMIC DNA]</scope>
</reference>
<reference key="5">
    <citation type="journal article" date="2004" name="Genome Res.">
        <title>The status, quality, and expansion of the NIH full-length cDNA project: the Mammalian Gene Collection (MGC).</title>
        <authorList>
            <consortium name="The MGC Project Team"/>
        </authorList>
    </citation>
    <scope>NUCLEOTIDE SEQUENCE [LARGE SCALE MRNA] (ISOFORM 2)</scope>
    <scope>VARIANT PRO-62</scope>
</reference>
<reference key="6">
    <citation type="journal article" date="2007" name="Br. J. Pharmacol.">
        <title>Specificity of the ecto-ATPase inhibitor ARL 67156 on human and mouse ectonucleotidases.</title>
        <authorList>
            <person name="Levesque S.A."/>
            <person name="Lavoie E.G."/>
            <person name="Lecka J."/>
            <person name="Bigonnesse F."/>
            <person name="Sevigny J."/>
        </authorList>
    </citation>
    <scope>ACTIVITY REGULATION</scope>
</reference>
<reference key="7">
    <citation type="journal article" date="2014" name="J. Proteomics">
        <title>An enzyme assisted RP-RPLC approach for in-depth analysis of human liver phosphoproteome.</title>
        <authorList>
            <person name="Bian Y."/>
            <person name="Song C."/>
            <person name="Cheng K."/>
            <person name="Dong M."/>
            <person name="Wang F."/>
            <person name="Huang J."/>
            <person name="Sun D."/>
            <person name="Wang L."/>
            <person name="Ye M."/>
            <person name="Zou H."/>
        </authorList>
    </citation>
    <scope>IDENTIFICATION BY MASS SPECTROMETRY [LARGE SCALE ANALYSIS]</scope>
    <source>
        <tissue>Liver</tissue>
    </source>
</reference>
<evidence type="ECO:0000250" key="1"/>
<evidence type="ECO:0000250" key="2">
    <source>
        <dbReference type="UniProtKB" id="O35795"/>
    </source>
</evidence>
<evidence type="ECO:0000255" key="3"/>
<evidence type="ECO:0000269" key="4">
    <source>
    </source>
</evidence>
<evidence type="ECO:0000269" key="5">
    <source>
    </source>
</evidence>
<evidence type="ECO:0000269" key="6">
    <source>
    </source>
</evidence>
<evidence type="ECO:0000269" key="7">
    <source>
    </source>
</evidence>
<evidence type="ECO:0000269" key="8">
    <source>
    </source>
</evidence>
<evidence type="ECO:0000303" key="9">
    <source>
    </source>
</evidence>
<evidence type="ECO:0000303" key="10">
    <source>
    </source>
</evidence>
<evidence type="ECO:0000305" key="11"/>
<protein>
    <recommendedName>
        <fullName>Ectonucleoside triphosphate diphosphohydrolase 8</fullName>
        <shortName>E-NTPDase 8</shortName>
        <shortName>NTPDase 8</shortName>
        <shortName>NTPDase8</shortName>
        <ecNumber>3.6.1.5</ecNumber>
    </recommendedName>
</protein>
<sequence>MGLSRKEQVFLALLGASGVSGLTALILLLVEATSVLLPTDIKFGIVFDAGSSHTSLFLYQWLANKENGTGVVSQALACQVEGPGISSYTSNAAQAGESLQGCLEEALVLIPEAQHRKTPTFLGATAGMRLLSRKNSSQARDIFAAVTQVLGRSPVDFWGAELLAGQAEGAFGWITVNYGLGTLVKYSFTGEWIQPPEEMLVGALDMGGASTQITFVPGGPILDKSTQADFRLYGSDYSVYTHSYLCFGRDQMLSRLLVGLVQSRPAALLRHPCYLSGYQTTLALGPLYESPCVHATPPLSLPQNLTVEGTGNPGACVSAIRELFNFSSCQGQEDCAFDGVYQPPLRGQFYAFSNFYYTFHFLNLTSRQPLSTVNATIWEFCQRPWKLVEASYPGQDRWLRDYCASGLYILTLLHEGYGFSEETWPSLEFRKQAGGVDIGWTLGYMLNLTGMIPADAPAQWRAESYGVWVAKVVFMVLALVAVVGAALVQLFWLQD</sequence>
<proteinExistence type="evidence at protein level"/>
<dbReference type="EC" id="3.6.1.5"/>
<dbReference type="EMBL" id="AY903953">
    <property type="protein sequence ID" value="AAW83515.1"/>
    <property type="molecule type" value="Transcribed_RNA"/>
</dbReference>
<dbReference type="EMBL" id="AY903954">
    <property type="protein sequence ID" value="AAW83516.1"/>
    <property type="molecule type" value="mRNA"/>
</dbReference>
<dbReference type="EMBL" id="AY430414">
    <property type="protein sequence ID" value="AAR04374.1"/>
    <property type="molecule type" value="mRNA"/>
</dbReference>
<dbReference type="EMBL" id="AY359088">
    <property type="protein sequence ID" value="AAQ89446.1"/>
    <property type="molecule type" value="mRNA"/>
</dbReference>
<dbReference type="EMBL" id="BX322799">
    <property type="status" value="NOT_ANNOTATED_CDS"/>
    <property type="molecule type" value="Genomic_DNA"/>
</dbReference>
<dbReference type="EMBL" id="BC141810">
    <property type="protein sequence ID" value="AAI41811.1"/>
    <property type="molecule type" value="mRNA"/>
</dbReference>
<dbReference type="CCDS" id="CCDS43913.1">
    <molecule id="Q5MY95-1"/>
</dbReference>
<dbReference type="CCDS" id="CCDS7043.1">
    <molecule id="Q5MY95-2"/>
</dbReference>
<dbReference type="RefSeq" id="NP_001028285.1">
    <molecule id="Q5MY95-1"/>
    <property type="nucleotide sequence ID" value="NM_001033113.2"/>
</dbReference>
<dbReference type="RefSeq" id="NP_940987.2">
    <molecule id="Q5MY95-2"/>
    <property type="nucleotide sequence ID" value="NM_198585.3"/>
</dbReference>
<dbReference type="SMR" id="Q5MY95"/>
<dbReference type="BioGRID" id="132022">
    <property type="interactions" value="4"/>
</dbReference>
<dbReference type="FunCoup" id="Q5MY95">
    <property type="interactions" value="359"/>
</dbReference>
<dbReference type="IntAct" id="Q5MY95">
    <property type="interactions" value="1"/>
</dbReference>
<dbReference type="STRING" id="9606.ENSP00000360561"/>
<dbReference type="BindingDB" id="Q5MY95"/>
<dbReference type="ChEMBL" id="CHEMBL5338"/>
<dbReference type="GlyCosmos" id="Q5MY95">
    <property type="glycosylation" value="3 sites, No reported glycans"/>
</dbReference>
<dbReference type="GlyGen" id="Q5MY95">
    <property type="glycosylation" value="4 sites, 1 N-linked glycan (1 site)"/>
</dbReference>
<dbReference type="iPTMnet" id="Q5MY95"/>
<dbReference type="PhosphoSitePlus" id="Q5MY95"/>
<dbReference type="BioMuta" id="ENTPD8"/>
<dbReference type="DMDM" id="158705943"/>
<dbReference type="jPOST" id="Q5MY95"/>
<dbReference type="MassIVE" id="Q5MY95"/>
<dbReference type="PaxDb" id="9606-ENSP00000360561"/>
<dbReference type="PeptideAtlas" id="Q5MY95"/>
<dbReference type="ProteomicsDB" id="63592">
    <molecule id="Q5MY95-1"/>
</dbReference>
<dbReference type="ProteomicsDB" id="63593">
    <molecule id="Q5MY95-2"/>
</dbReference>
<dbReference type="Antibodypedia" id="19016">
    <property type="antibodies" value="148 antibodies from 20 providers"/>
</dbReference>
<dbReference type="DNASU" id="377841"/>
<dbReference type="Ensembl" id="ENST00000344119.6">
    <molecule id="Q5MY95-2"/>
    <property type="protein sequence ID" value="ENSP00000344089.2"/>
    <property type="gene ID" value="ENSG00000188833.10"/>
</dbReference>
<dbReference type="Ensembl" id="ENST00000371506.7">
    <molecule id="Q5MY95-1"/>
    <property type="protein sequence ID" value="ENSP00000360561.2"/>
    <property type="gene ID" value="ENSG00000188833.10"/>
</dbReference>
<dbReference type="GeneID" id="377841"/>
<dbReference type="KEGG" id="hsa:377841"/>
<dbReference type="MANE-Select" id="ENST00000371506.7">
    <property type="protein sequence ID" value="ENSP00000360561.2"/>
    <property type="RefSeq nucleotide sequence ID" value="NM_001033113.2"/>
    <property type="RefSeq protein sequence ID" value="NP_001028285.1"/>
</dbReference>
<dbReference type="UCSC" id="uc004cmw.3">
    <molecule id="Q5MY95-1"/>
    <property type="organism name" value="human"/>
</dbReference>
<dbReference type="AGR" id="HGNC:24860"/>
<dbReference type="CTD" id="377841"/>
<dbReference type="DisGeNET" id="377841"/>
<dbReference type="GeneCards" id="ENTPD8"/>
<dbReference type="HGNC" id="HGNC:24860">
    <property type="gene designation" value="ENTPD8"/>
</dbReference>
<dbReference type="HPA" id="ENSG00000188833">
    <property type="expression patterns" value="Tissue enhanced (intestine, liver, stomach)"/>
</dbReference>
<dbReference type="MIM" id="616748">
    <property type="type" value="gene"/>
</dbReference>
<dbReference type="neXtProt" id="NX_Q5MY95"/>
<dbReference type="OpenTargets" id="ENSG00000188833"/>
<dbReference type="PharmGKB" id="PA142671906"/>
<dbReference type="VEuPathDB" id="HostDB:ENSG00000188833"/>
<dbReference type="eggNOG" id="KOG1386">
    <property type="taxonomic scope" value="Eukaryota"/>
</dbReference>
<dbReference type="GeneTree" id="ENSGT01110000267162"/>
<dbReference type="HOGENOM" id="CLU_010246_2_3_1"/>
<dbReference type="InParanoid" id="Q5MY95"/>
<dbReference type="OMA" id="VEGEYLW"/>
<dbReference type="OrthoDB" id="6372431at2759"/>
<dbReference type="PAN-GO" id="Q5MY95">
    <property type="GO annotations" value="4 GO annotations based on evolutionary models"/>
</dbReference>
<dbReference type="PhylomeDB" id="Q5MY95"/>
<dbReference type="TreeFam" id="TF332859"/>
<dbReference type="BRENDA" id="3.6.1.5">
    <property type="organism ID" value="2681"/>
</dbReference>
<dbReference type="PathwayCommons" id="Q5MY95"/>
<dbReference type="Reactome" id="R-HSA-8850843">
    <property type="pathway name" value="Phosphate bond hydrolysis by NTPDase proteins"/>
</dbReference>
<dbReference type="SABIO-RK" id="Q5MY95"/>
<dbReference type="SignaLink" id="Q5MY95"/>
<dbReference type="BioGRID-ORCS" id="377841">
    <property type="hits" value="13 hits in 1149 CRISPR screens"/>
</dbReference>
<dbReference type="GenomeRNAi" id="377841"/>
<dbReference type="Pharos" id="Q5MY95">
    <property type="development level" value="Tbio"/>
</dbReference>
<dbReference type="PRO" id="PR:Q5MY95"/>
<dbReference type="Proteomes" id="UP000005640">
    <property type="component" value="Chromosome 9"/>
</dbReference>
<dbReference type="RNAct" id="Q5MY95">
    <property type="molecule type" value="protein"/>
</dbReference>
<dbReference type="Bgee" id="ENSG00000188833">
    <property type="expression patterns" value="Expressed in mucosa of transverse colon and 69 other cell types or tissues"/>
</dbReference>
<dbReference type="ExpressionAtlas" id="Q5MY95">
    <property type="expression patterns" value="baseline and differential"/>
</dbReference>
<dbReference type="GO" id="GO:0005886">
    <property type="term" value="C:plasma membrane"/>
    <property type="evidence" value="ECO:0000318"/>
    <property type="project" value="GO_Central"/>
</dbReference>
<dbReference type="GO" id="GO:0004050">
    <property type="term" value="F:apyrase activity"/>
    <property type="evidence" value="ECO:0007669"/>
    <property type="project" value="UniProtKB-EC"/>
</dbReference>
<dbReference type="GO" id="GO:0005524">
    <property type="term" value="F:ATP binding"/>
    <property type="evidence" value="ECO:0007669"/>
    <property type="project" value="UniProtKB-KW"/>
</dbReference>
<dbReference type="GO" id="GO:0004382">
    <property type="term" value="F:GDP phosphatase activity"/>
    <property type="evidence" value="ECO:0000318"/>
    <property type="project" value="GO_Central"/>
</dbReference>
<dbReference type="GO" id="GO:0046872">
    <property type="term" value="F:metal ion binding"/>
    <property type="evidence" value="ECO:0007669"/>
    <property type="project" value="UniProtKB-KW"/>
</dbReference>
<dbReference type="GO" id="GO:0017111">
    <property type="term" value="F:ribonucleoside triphosphate phosphatase activity"/>
    <property type="evidence" value="ECO:0000318"/>
    <property type="project" value="GO_Central"/>
</dbReference>
<dbReference type="GO" id="GO:0045134">
    <property type="term" value="F:UDP phosphatase activity"/>
    <property type="evidence" value="ECO:0000318"/>
    <property type="project" value="GO_Central"/>
</dbReference>
<dbReference type="GO" id="GO:0009133">
    <property type="term" value="P:nucleoside diphosphate biosynthetic process"/>
    <property type="evidence" value="ECO:0007669"/>
    <property type="project" value="Ensembl"/>
</dbReference>
<dbReference type="GO" id="GO:0009134">
    <property type="term" value="P:nucleoside diphosphate catabolic process"/>
    <property type="evidence" value="ECO:0000318"/>
    <property type="project" value="GO_Central"/>
</dbReference>
<dbReference type="GO" id="GO:0009124">
    <property type="term" value="P:nucleoside monophosphate biosynthetic process"/>
    <property type="evidence" value="ECO:0007669"/>
    <property type="project" value="Ensembl"/>
</dbReference>
<dbReference type="CDD" id="cd24113">
    <property type="entry name" value="ASKHA_NBD_NTPDase8"/>
    <property type="match status" value="1"/>
</dbReference>
<dbReference type="FunFam" id="3.30.420.150:FF:000002">
    <property type="entry name" value="Ectonucleoside triphosphate diphosphohydrolase 1"/>
    <property type="match status" value="1"/>
</dbReference>
<dbReference type="FunFam" id="3.30.420.40:FF:000068">
    <property type="entry name" value="Ectonucleoside triphosphate diphosphohydrolase 1"/>
    <property type="match status" value="1"/>
</dbReference>
<dbReference type="Gene3D" id="3.30.420.40">
    <property type="match status" value="1"/>
</dbReference>
<dbReference type="Gene3D" id="3.30.420.150">
    <property type="entry name" value="Exopolyphosphatase. Domain 2"/>
    <property type="match status" value="1"/>
</dbReference>
<dbReference type="InterPro" id="IPR000407">
    <property type="entry name" value="GDA1_CD39_NTPase"/>
</dbReference>
<dbReference type="PANTHER" id="PTHR11782">
    <property type="entry name" value="ADENOSINE/GUANOSINE DIPHOSPHATASE"/>
    <property type="match status" value="1"/>
</dbReference>
<dbReference type="PANTHER" id="PTHR11782:SF31">
    <property type="entry name" value="ECTONUCLEOSIDE TRIPHOSPHATE DIPHOSPHOHYDROLASE 8"/>
    <property type="match status" value="1"/>
</dbReference>
<dbReference type="Pfam" id="PF01150">
    <property type="entry name" value="GDA1_CD39"/>
    <property type="match status" value="1"/>
</dbReference>
<dbReference type="PROSITE" id="PS01238">
    <property type="entry name" value="GDA1_CD39_NTPASE"/>
    <property type="match status" value="1"/>
</dbReference>
<comment type="function">
    <text evidence="6 7">Canalicular ectonucleoside NTPDase responsible for the main hepatic NTPDase activity. Ectonucleoside NTPDases catalyze the hydrolysis of gamma- and beta-phosphate residues of nucleotides, playing a central role in concentration of extracellular nucleotides. Has activity toward ATP, ADP, UTP and UDP, but not toward AMP.</text>
</comment>
<comment type="catalytic activity">
    <reaction evidence="6 7">
        <text>a ribonucleoside 5'-triphosphate + 2 H2O = a ribonucleoside 5'-phosphate + 2 phosphate + 2 H(+)</text>
        <dbReference type="Rhea" id="RHEA:36795"/>
        <dbReference type="ChEBI" id="CHEBI:15377"/>
        <dbReference type="ChEBI" id="CHEBI:15378"/>
        <dbReference type="ChEBI" id="CHEBI:43474"/>
        <dbReference type="ChEBI" id="CHEBI:58043"/>
        <dbReference type="ChEBI" id="CHEBI:61557"/>
        <dbReference type="EC" id="3.6.1.5"/>
    </reaction>
</comment>
<comment type="cofactor">
    <cofactor evidence="1">
        <name>Ca(2+)</name>
        <dbReference type="ChEBI" id="CHEBI:29108"/>
    </cofactor>
    <cofactor evidence="1">
        <name>Mg(2+)</name>
        <dbReference type="ChEBI" id="CHEBI:18420"/>
    </cofactor>
    <text evidence="1">Ca(2+) or Mg(2+). Has lower efficiency with Mg(2+).</text>
</comment>
<comment type="activity regulation">
    <text evidence="8">Not inhibited by ARL 67156.</text>
</comment>
<comment type="biophysicochemical properties">
    <kinetics>
        <KM evidence="7">81 uM for ATP</KM>
        <KM evidence="7">137 uM for ADP</KM>
        <KM evidence="7">480 uM for UTP</KM>
        <KM evidence="7">241 uM for UDP</KM>
        <Vmax evidence="7">790.0 nmol/min/mg enzyme with ATP as substrate</Vmax>
        <Vmax evidence="7">163.0 nmol/min/mg enzyme with ADP as substrate</Vmax>
        <Vmax evidence="7">1100.0 nmol/min/mg enzyme with UTP as substrate</Vmax>
        <Vmax evidence="7">110.0 nmol/min/mg enzyme with UDP as substrate</Vmax>
    </kinetics>
</comment>
<comment type="interaction">
    <interactant intactId="EBI-12909060">
        <id>Q5MY95-2</id>
    </interactant>
    <interactant intactId="EBI-11749983">
        <id>Q9UHP7-3</id>
        <label>CLEC2D</label>
    </interactant>
    <organismsDiffer>false</organismsDiffer>
    <experiments>3</experiments>
</comment>
<comment type="subcellular location">
    <subcellularLocation>
        <location evidence="1">Cell membrane</location>
        <topology evidence="1">Multi-pass membrane protein</topology>
    </subcellularLocation>
</comment>
<comment type="alternative products">
    <event type="alternative splicing"/>
    <isoform>
        <id>Q5MY95-1</id>
        <name>1</name>
        <sequence type="displayed"/>
    </isoform>
    <isoform>
        <id>Q5MY95-2</id>
        <name>2</name>
        <sequence type="described" ref="VSP_028559"/>
    </isoform>
</comment>
<comment type="domain">
    <text evidence="6">The transmembranous domains are involved in regulation of enzyme activity.</text>
</comment>
<comment type="PTM">
    <text evidence="6">N-glycosylated.</text>
</comment>
<comment type="similarity">
    <text evidence="11">Belongs to the GDA1/CD39 NTPase family.</text>
</comment>
<feature type="chain" id="PRO_0000306882" description="Ectonucleoside triphosphate diphosphohydrolase 8">
    <location>
        <begin position="1"/>
        <end position="495"/>
    </location>
</feature>
<feature type="topological domain" description="Cytoplasmic" evidence="3">
    <location>
        <begin position="1"/>
        <end position="8"/>
    </location>
</feature>
<feature type="transmembrane region" description="Helical" evidence="3">
    <location>
        <begin position="9"/>
        <end position="29"/>
    </location>
</feature>
<feature type="topological domain" description="Extracellular" evidence="3">
    <location>
        <begin position="30"/>
        <end position="471"/>
    </location>
</feature>
<feature type="transmembrane region" description="Helical" evidence="3">
    <location>
        <begin position="472"/>
        <end position="492"/>
    </location>
</feature>
<feature type="topological domain" description="Cytoplasmic" evidence="3">
    <location>
        <begin position="493"/>
        <end position="495"/>
    </location>
</feature>
<feature type="active site" description="Proton acceptor" evidence="2">
    <location>
        <position position="168"/>
    </location>
</feature>
<feature type="glycosylation site" description="N-linked (GlcNAc...) asparagine" evidence="3">
    <location>
        <position position="67"/>
    </location>
</feature>
<feature type="glycosylation site" description="N-linked (GlcNAc...) asparagine" evidence="3">
    <location>
        <position position="304"/>
    </location>
</feature>
<feature type="glycosylation site" description="N-linked (GlcNAc...) asparagine" evidence="3">
    <location>
        <position position="363"/>
    </location>
</feature>
<feature type="disulfide bond" evidence="1">
    <location>
        <begin position="78"/>
        <end position="102"/>
    </location>
</feature>
<feature type="disulfide bond" evidence="1">
    <location>
        <begin position="246"/>
        <end position="292"/>
    </location>
</feature>
<feature type="disulfide bond" evidence="1">
    <location>
        <begin position="329"/>
        <end position="335"/>
    </location>
</feature>
<feature type="disulfide bond" evidence="1">
    <location>
        <begin position="381"/>
        <end position="403"/>
    </location>
</feature>
<feature type="splice variant" id="VSP_028559" description="In isoform 2." evidence="9 10">
    <location>
        <begin position="351"/>
        <end position="387"/>
    </location>
</feature>
<feature type="sequence variant" id="VAR_035339" description="In dbSNP:rs6606582." evidence="4 5 6 7">
    <original>L</original>
    <variation>P</variation>
    <location>
        <position position="62"/>
    </location>
</feature>
<feature type="sequence variant" id="VAR_061385" description="In dbSNP:rs61491031.">
    <original>E</original>
    <variation>K</variation>
    <location>
        <position position="428"/>
    </location>
</feature>
<name>ENTP8_HUMAN</name>
<accession>Q5MY95</accession>
<accession>A2BG17</accession>
<accession>Q6UVZ0</accession>
<organism>
    <name type="scientific">Homo sapiens</name>
    <name type="common">Human</name>
    <dbReference type="NCBI Taxonomy" id="9606"/>
    <lineage>
        <taxon>Eukaryota</taxon>
        <taxon>Metazoa</taxon>
        <taxon>Chordata</taxon>
        <taxon>Craniata</taxon>
        <taxon>Vertebrata</taxon>
        <taxon>Euteleostomi</taxon>
        <taxon>Mammalia</taxon>
        <taxon>Eutheria</taxon>
        <taxon>Euarchontoglires</taxon>
        <taxon>Primates</taxon>
        <taxon>Haplorrhini</taxon>
        <taxon>Catarrhini</taxon>
        <taxon>Hominidae</taxon>
        <taxon>Homo</taxon>
    </lineage>
</organism>